<gene>
    <name type="primary">sigK</name>
    <name type="ORF">DDB_G0267476</name>
</gene>
<dbReference type="EMBL" id="AY392438">
    <property type="protein sequence ID" value="AAQ98880.1"/>
    <property type="molecule type" value="Genomic_DNA"/>
</dbReference>
<dbReference type="EMBL" id="AAFI02000003">
    <property type="protein sequence ID" value="EAL73191.1"/>
    <property type="molecule type" value="Genomic_DNA"/>
</dbReference>
<dbReference type="RefSeq" id="XP_647401.1">
    <property type="nucleotide sequence ID" value="XM_642309.1"/>
</dbReference>
<dbReference type="FunCoup" id="Q6TMJ6">
    <property type="interactions" value="243"/>
</dbReference>
<dbReference type="STRING" id="44689.Q6TMJ6"/>
<dbReference type="GlyCosmos" id="Q6TMJ6">
    <property type="glycosylation" value="5 sites, No reported glycans"/>
</dbReference>
<dbReference type="GlyGen" id="Q6TMJ6">
    <property type="glycosylation" value="5 sites"/>
</dbReference>
<dbReference type="PaxDb" id="44689-DDB0191495"/>
<dbReference type="EnsemblProtists" id="EAL73191">
    <property type="protein sequence ID" value="EAL73191"/>
    <property type="gene ID" value="DDB_G0267476"/>
</dbReference>
<dbReference type="GeneID" id="8616208"/>
<dbReference type="KEGG" id="ddi:DDB_G0267476"/>
<dbReference type="dictyBase" id="DDB_G0267476">
    <property type="gene designation" value="sigK"/>
</dbReference>
<dbReference type="VEuPathDB" id="AmoebaDB:DDB_G0267476"/>
<dbReference type="eggNOG" id="ENOG502R14C">
    <property type="taxonomic scope" value="Eukaryota"/>
</dbReference>
<dbReference type="HOGENOM" id="CLU_630795_0_0_1"/>
<dbReference type="InParanoid" id="Q6TMJ6"/>
<dbReference type="OMA" id="YVRFNQR"/>
<dbReference type="PhylomeDB" id="Q6TMJ6"/>
<dbReference type="PRO" id="PR:Q6TMJ6"/>
<dbReference type="Proteomes" id="UP000002195">
    <property type="component" value="Chromosome 1"/>
</dbReference>
<dbReference type="InterPro" id="IPR002049">
    <property type="entry name" value="LE_dom"/>
</dbReference>
<dbReference type="InterPro" id="IPR053369">
    <property type="entry name" value="SrfA-induced_signal"/>
</dbReference>
<dbReference type="PANTHER" id="PTHR32256">
    <property type="match status" value="1"/>
</dbReference>
<dbReference type="PANTHER" id="PTHR32256:SF18">
    <property type="entry name" value="SRFA-INDUCED GENE K PROTEIN"/>
    <property type="match status" value="1"/>
</dbReference>
<dbReference type="Pfam" id="PF00053">
    <property type="entry name" value="EGF_laminin"/>
    <property type="match status" value="1"/>
</dbReference>
<dbReference type="SUPFAM" id="SSF69304">
    <property type="entry name" value="Tricorn protease N-terminal domain"/>
    <property type="match status" value="1"/>
</dbReference>
<dbReference type="PROSITE" id="PS00022">
    <property type="entry name" value="EGF_1"/>
    <property type="match status" value="2"/>
</dbReference>
<dbReference type="PROSITE" id="PS01186">
    <property type="entry name" value="EGF_2"/>
    <property type="match status" value="2"/>
</dbReference>
<comment type="developmental stage">
    <text evidence="3">Expressed in stalk cells late in development.</text>
</comment>
<comment type="induction">
    <text evidence="3">Induced by srfA, during development.</text>
</comment>
<organism>
    <name type="scientific">Dictyostelium discoideum</name>
    <name type="common">Social amoeba</name>
    <dbReference type="NCBI Taxonomy" id="44689"/>
    <lineage>
        <taxon>Eukaryota</taxon>
        <taxon>Amoebozoa</taxon>
        <taxon>Evosea</taxon>
        <taxon>Eumycetozoa</taxon>
        <taxon>Dictyostelia</taxon>
        <taxon>Dictyosteliales</taxon>
        <taxon>Dictyosteliaceae</taxon>
        <taxon>Dictyostelium</taxon>
    </lineage>
</organism>
<evidence type="ECO:0000250" key="1"/>
<evidence type="ECO:0000255" key="2"/>
<evidence type="ECO:0000269" key="3">
    <source>
    </source>
</evidence>
<sequence length="426" mass="46615">MKKMKILSFFILSLAIIIGIVYSRQCDDKCKQDYPYSSCNGNLNLYRGLGYDGNGNVIFSGKYNSSQGSGGFGLPSIFSVPSSGGCQLSKRFDIQGEILDGPGYTALDYFYKYLPQLDRYYVRFNQRGSPIFSIYNQTSNEIKAVFNIFNTPFVPAFSQNESAPFFVYGGYGIYGLAKYPTDRSDAQQAKLIYQSQIVNGLEIDGDQLYMTTYQGQFLKGSLNCLNCTKDQLQLLVTDSELASATSVSGFALTSDYMYFSYSGGIKGYPKNGDASRVRKLVSENVVAMISNGDFLYYQTDSGVVKSVSTSGNHPQVNILYTPVSDNQCQCSVGFSGDDCRQCDNGMVLWASDNGIPMCSPLNSLGKPKTCYAAYQCGSSPFIICNGTCTCLPGFSGNDCTLCGNGGEVIWENGYPTCVIQIKKIIT</sequence>
<name>SIGK_DICDI</name>
<accession>Q6TMJ6</accession>
<accession>Q55FY2</accession>
<keyword id="KW-0217">Developmental protein</keyword>
<keyword id="KW-1015">Disulfide bond</keyword>
<keyword id="KW-0325">Glycoprotein</keyword>
<keyword id="KW-0424">Laminin EGF-like domain</keyword>
<keyword id="KW-1185">Reference proteome</keyword>
<keyword id="KW-0677">Repeat</keyword>
<keyword id="KW-0732">Signal</keyword>
<reference key="1">
    <citation type="journal article" date="2004" name="Eukaryot. Cell">
        <title>Identification of genes dependent on the MADS box transcription factor SrfA in Dictyostelium discoideum development.</title>
        <authorList>
            <person name="Escalante R."/>
            <person name="Iranfar N."/>
            <person name="Sastre L."/>
            <person name="Loomis W.F."/>
        </authorList>
    </citation>
    <scope>NUCLEOTIDE SEQUENCE [GENOMIC DNA]</scope>
    <scope>DEVELOPMENTAL STAGE</scope>
    <scope>INDUCTION BY SRFA</scope>
    <source>
        <strain>AX4</strain>
    </source>
</reference>
<reference key="2">
    <citation type="journal article" date="2005" name="Nature">
        <title>The genome of the social amoeba Dictyostelium discoideum.</title>
        <authorList>
            <person name="Eichinger L."/>
            <person name="Pachebat J.A."/>
            <person name="Gloeckner G."/>
            <person name="Rajandream M.A."/>
            <person name="Sucgang R."/>
            <person name="Berriman M."/>
            <person name="Song J."/>
            <person name="Olsen R."/>
            <person name="Szafranski K."/>
            <person name="Xu Q."/>
            <person name="Tunggal B."/>
            <person name="Kummerfeld S."/>
            <person name="Madera M."/>
            <person name="Konfortov B.A."/>
            <person name="Rivero F."/>
            <person name="Bankier A.T."/>
            <person name="Lehmann R."/>
            <person name="Hamlin N."/>
            <person name="Davies R."/>
            <person name="Gaudet P."/>
            <person name="Fey P."/>
            <person name="Pilcher K."/>
            <person name="Chen G."/>
            <person name="Saunders D."/>
            <person name="Sodergren E.J."/>
            <person name="Davis P."/>
            <person name="Kerhornou A."/>
            <person name="Nie X."/>
            <person name="Hall N."/>
            <person name="Anjard C."/>
            <person name="Hemphill L."/>
            <person name="Bason N."/>
            <person name="Farbrother P."/>
            <person name="Desany B."/>
            <person name="Just E."/>
            <person name="Morio T."/>
            <person name="Rost R."/>
            <person name="Churcher C.M."/>
            <person name="Cooper J."/>
            <person name="Haydock S."/>
            <person name="van Driessche N."/>
            <person name="Cronin A."/>
            <person name="Goodhead I."/>
            <person name="Muzny D.M."/>
            <person name="Mourier T."/>
            <person name="Pain A."/>
            <person name="Lu M."/>
            <person name="Harper D."/>
            <person name="Lindsay R."/>
            <person name="Hauser H."/>
            <person name="James K.D."/>
            <person name="Quiles M."/>
            <person name="Madan Babu M."/>
            <person name="Saito T."/>
            <person name="Buchrieser C."/>
            <person name="Wardroper A."/>
            <person name="Felder M."/>
            <person name="Thangavelu M."/>
            <person name="Johnson D."/>
            <person name="Knights A."/>
            <person name="Loulseged H."/>
            <person name="Mungall K.L."/>
            <person name="Oliver K."/>
            <person name="Price C."/>
            <person name="Quail M.A."/>
            <person name="Urushihara H."/>
            <person name="Hernandez J."/>
            <person name="Rabbinowitsch E."/>
            <person name="Steffen D."/>
            <person name="Sanders M."/>
            <person name="Ma J."/>
            <person name="Kohara Y."/>
            <person name="Sharp S."/>
            <person name="Simmonds M.N."/>
            <person name="Spiegler S."/>
            <person name="Tivey A."/>
            <person name="Sugano S."/>
            <person name="White B."/>
            <person name="Walker D."/>
            <person name="Woodward J.R."/>
            <person name="Winckler T."/>
            <person name="Tanaka Y."/>
            <person name="Shaulsky G."/>
            <person name="Schleicher M."/>
            <person name="Weinstock G.M."/>
            <person name="Rosenthal A."/>
            <person name="Cox E.C."/>
            <person name="Chisholm R.L."/>
            <person name="Gibbs R.A."/>
            <person name="Loomis W.F."/>
            <person name="Platzer M."/>
            <person name="Kay R.R."/>
            <person name="Williams J.G."/>
            <person name="Dear P.H."/>
            <person name="Noegel A.A."/>
            <person name="Barrell B.G."/>
            <person name="Kuspa A."/>
        </authorList>
    </citation>
    <scope>NUCLEOTIDE SEQUENCE [LARGE SCALE GENOMIC DNA]</scope>
    <source>
        <strain>AX4</strain>
    </source>
</reference>
<feature type="signal peptide" evidence="2">
    <location>
        <begin position="1"/>
        <end position="23"/>
    </location>
</feature>
<feature type="chain" id="PRO_0000397675" description="SrfA-induced gene K protein">
    <location>
        <begin position="24"/>
        <end position="426"/>
    </location>
</feature>
<feature type="domain" description="Laminin EGF-like 1">
    <location>
        <begin position="325"/>
        <end position="348"/>
    </location>
</feature>
<feature type="domain" description="Laminin EGF-like 2">
    <location>
        <begin position="384"/>
        <end position="408"/>
    </location>
</feature>
<feature type="glycosylation site" description="N-linked (GlcNAc...) asparagine" evidence="2">
    <location>
        <position position="64"/>
    </location>
</feature>
<feature type="glycosylation site" description="N-linked (GlcNAc...) asparagine" evidence="2">
    <location>
        <position position="136"/>
    </location>
</feature>
<feature type="glycosylation site" description="N-linked (GlcNAc...) asparagine" evidence="2">
    <location>
        <position position="160"/>
    </location>
</feature>
<feature type="glycosylation site" description="N-linked (GlcNAc...) asparagine" evidence="2">
    <location>
        <position position="226"/>
    </location>
</feature>
<feature type="glycosylation site" description="N-linked (GlcNAc...) asparagine" evidence="2">
    <location>
        <position position="385"/>
    </location>
</feature>
<feature type="disulfide bond" evidence="1">
    <location>
        <begin position="330"/>
        <end position="339"/>
    </location>
</feature>
<feature type="disulfide bond" evidence="1">
    <location>
        <begin position="342"/>
        <end position="358"/>
    </location>
</feature>
<feature type="disulfide bond" evidence="1">
    <location>
        <begin position="370"/>
        <end position="388"/>
    </location>
</feature>
<protein>
    <recommendedName>
        <fullName>SrfA-induced gene K protein</fullName>
    </recommendedName>
</protein>
<proteinExistence type="evidence at transcript level"/>